<comment type="function">
    <text evidence="2">Part of a complex that catalyzes the reversible reduction of CoM-S-S-CoB to the thiol-coenzymes H-S-CoM (coenzyme M) and H-S-CoB (coenzyme B). Probably involved in methylotrophic methanogenesis but not in aceticlastic methanogenesis.</text>
</comment>
<comment type="catalytic activity">
    <reaction evidence="5">
        <text>coenzyme B + coenzyme M + 2 oxidized [2Fe-2S]-[ferredoxin] = coenzyme M-coenzyme B heterodisulfide + 2 reduced [2Fe-2S]-[ferredoxin] + 2 H(+)</text>
        <dbReference type="Rhea" id="RHEA:55160"/>
        <dbReference type="Rhea" id="RHEA-COMP:10000"/>
        <dbReference type="Rhea" id="RHEA-COMP:10001"/>
        <dbReference type="ChEBI" id="CHEBI:15378"/>
        <dbReference type="ChEBI" id="CHEBI:33737"/>
        <dbReference type="ChEBI" id="CHEBI:33738"/>
        <dbReference type="ChEBI" id="CHEBI:58319"/>
        <dbReference type="ChEBI" id="CHEBI:58411"/>
        <dbReference type="ChEBI" id="CHEBI:58596"/>
        <dbReference type="EC" id="1.8.7.3"/>
    </reaction>
</comment>
<comment type="cofactor">
    <cofactor evidence="1">
        <name>[4Fe-4S] cluster</name>
        <dbReference type="ChEBI" id="CHEBI:49883"/>
    </cofactor>
    <text evidence="1">Binds 1 [4Fe-4S] cluster.</text>
</comment>
<comment type="pathway">
    <text evidence="4">Cofactor metabolism; coenzyme M-coenzyme B heterodisulfide reduction; coenzyme B and coenzyme M from coenzyme M-coenzyme B heterodisulfide: step 1/1.</text>
</comment>
<comment type="subunit">
    <text evidence="2">The ferredoxin:CoB-CoM heterodisulfide reductase is composed of three subunits; HdrA1, HdrB1 and HdrC1.</text>
</comment>
<comment type="subcellular location">
    <subcellularLocation>
        <location evidence="4">Cytoplasm</location>
    </subcellularLocation>
</comment>
<comment type="induction">
    <text evidence="2">Induced on trimethylamine or methanol, but not on acetate as the sole energy source.</text>
</comment>
<comment type="disruption phenotype">
    <text evidence="2">Triple hdrA1C1B1 deletion decreases methane production from methanol, but does not affect methanogenesis from acetate. Deletion results in up-regulation of CoB-SH and CoM-SH synthesis and transport, and methylsulfide methyltransferases.</text>
</comment>
<comment type="similarity">
    <text evidence="4">Belongs to the HdrB family.</text>
</comment>
<feature type="chain" id="PRO_0000443935" description="Ferredoxin:CoB-CoM heterodisulfide reductase subunit B">
    <location>
        <begin position="1"/>
        <end position="314"/>
    </location>
</feature>
<protein>
    <recommendedName>
        <fullName evidence="4">Ferredoxin:CoB-CoM heterodisulfide reductase subunit B</fullName>
        <ecNumber evidence="5">1.8.7.3</ecNumber>
    </recommendedName>
</protein>
<accession>Q8TLB2</accession>
<sequence>MKAIESIPDRKLLLFKSCMVGQEYPGIETATSYVFDRLGVDYCINDEQSCCTGIGHYTDVFEGLTTAAIAARNFAVARKCGYPNITCLCSTCYAINKDACELLNTNDGVREKVNSIFREKGFDDLVYEKDSMNPRTNIYHAVEVLLSKVEKIREEIKFDFPGVKAASHHACHYYKVKYLDVIGNPENPQLIDTIAEACGASPVRWYEDRTLTCGMGFSQLHLNKSTSLQVTKTKLDSLQRAGVELMIHMCPNCHIQYDRYQPVIEKEFGVEYDMVHMNIAQFVALSMGADPYKVCGFQTHSVPLEGFLEKTGII</sequence>
<name>HDRB1_METAC</name>
<proteinExistence type="evidence at protein level"/>
<dbReference type="EC" id="1.8.7.3" evidence="5"/>
<dbReference type="EMBL" id="AE010299">
    <property type="protein sequence ID" value="AAM06499.1"/>
    <property type="molecule type" value="Genomic_DNA"/>
</dbReference>
<dbReference type="RefSeq" id="WP_011023064.1">
    <property type="nucleotide sequence ID" value="NC_003552.1"/>
</dbReference>
<dbReference type="SMR" id="Q8TLB2"/>
<dbReference type="STRING" id="188937.MA_3126"/>
<dbReference type="EnsemblBacteria" id="AAM06499">
    <property type="protein sequence ID" value="AAM06499"/>
    <property type="gene ID" value="MA_3126"/>
</dbReference>
<dbReference type="GeneID" id="1475020"/>
<dbReference type="KEGG" id="mac:MA_3126"/>
<dbReference type="HOGENOM" id="CLU_052147_0_0_2"/>
<dbReference type="InParanoid" id="Q8TLB2"/>
<dbReference type="OrthoDB" id="37916at2157"/>
<dbReference type="PhylomeDB" id="Q8TLB2"/>
<dbReference type="BioCyc" id="MetaCyc:MONOMER-20157"/>
<dbReference type="UniPathway" id="UPA00647">
    <property type="reaction ID" value="UER00700"/>
</dbReference>
<dbReference type="Proteomes" id="UP000002487">
    <property type="component" value="Chromosome"/>
</dbReference>
<dbReference type="GO" id="GO:0005737">
    <property type="term" value="C:cytoplasm"/>
    <property type="evidence" value="ECO:0007669"/>
    <property type="project" value="UniProtKB-SubCell"/>
</dbReference>
<dbReference type="GO" id="GO:0051539">
    <property type="term" value="F:4 iron, 4 sulfur cluster binding"/>
    <property type="evidence" value="ECO:0007669"/>
    <property type="project" value="UniProtKB-KW"/>
</dbReference>
<dbReference type="GO" id="GO:0046872">
    <property type="term" value="F:metal ion binding"/>
    <property type="evidence" value="ECO:0007669"/>
    <property type="project" value="UniProtKB-KW"/>
</dbReference>
<dbReference type="GO" id="GO:0016491">
    <property type="term" value="F:oxidoreductase activity"/>
    <property type="evidence" value="ECO:0007669"/>
    <property type="project" value="UniProtKB-KW"/>
</dbReference>
<dbReference type="GO" id="GO:0015948">
    <property type="term" value="P:methanogenesis"/>
    <property type="evidence" value="ECO:0007669"/>
    <property type="project" value="UniProtKB-KW"/>
</dbReference>
<dbReference type="Gene3D" id="1.20.1050.140">
    <property type="match status" value="1"/>
</dbReference>
<dbReference type="InterPro" id="IPR004017">
    <property type="entry name" value="Cys_rich_dom"/>
</dbReference>
<dbReference type="InterPro" id="IPR053571">
    <property type="entry name" value="HdrB"/>
</dbReference>
<dbReference type="InterPro" id="IPR051278">
    <property type="entry name" value="HdrB/HdrD_reductase"/>
</dbReference>
<dbReference type="NCBIfam" id="NF041780">
    <property type="entry name" value="hetero_SS_HdrB"/>
    <property type="match status" value="1"/>
</dbReference>
<dbReference type="PANTHER" id="PTHR42947">
    <property type="entry name" value="COB--COM HETERODISULFIDE REDUCTASE SUBUNIT B 1"/>
    <property type="match status" value="1"/>
</dbReference>
<dbReference type="PANTHER" id="PTHR42947:SF1">
    <property type="entry name" value="COB--COM HETERODISULFIDE REDUCTASE SUBUNIT B 1"/>
    <property type="match status" value="1"/>
</dbReference>
<dbReference type="Pfam" id="PF02754">
    <property type="entry name" value="CCG"/>
    <property type="match status" value="2"/>
</dbReference>
<keyword id="KW-0004">4Fe-4S</keyword>
<keyword id="KW-0963">Cytoplasm</keyword>
<keyword id="KW-0408">Iron</keyword>
<keyword id="KW-0411">Iron-sulfur</keyword>
<keyword id="KW-0479">Metal-binding</keyword>
<keyword id="KW-0484">Methanogenesis</keyword>
<keyword id="KW-0560">Oxidoreductase</keyword>
<keyword id="KW-1185">Reference proteome</keyword>
<gene>
    <name evidence="3" type="primary">hdrB1</name>
    <name evidence="6" type="ordered locus">MA_3126</name>
</gene>
<reference key="1">
    <citation type="journal article" date="2002" name="Genome Res.">
        <title>The genome of Methanosarcina acetivorans reveals extensive metabolic and physiological diversity.</title>
        <authorList>
            <person name="Galagan J.E."/>
            <person name="Nusbaum C."/>
            <person name="Roy A."/>
            <person name="Endrizzi M.G."/>
            <person name="Macdonald P."/>
            <person name="FitzHugh W."/>
            <person name="Calvo S."/>
            <person name="Engels R."/>
            <person name="Smirnov S."/>
            <person name="Atnoor D."/>
            <person name="Brown A."/>
            <person name="Allen N."/>
            <person name="Naylor J."/>
            <person name="Stange-Thomann N."/>
            <person name="DeArellano K."/>
            <person name="Johnson R."/>
            <person name="Linton L."/>
            <person name="McEwan P."/>
            <person name="McKernan K."/>
            <person name="Talamas J."/>
            <person name="Tirrell A."/>
            <person name="Ye W."/>
            <person name="Zimmer A."/>
            <person name="Barber R.D."/>
            <person name="Cann I."/>
            <person name="Graham D.E."/>
            <person name="Grahame D.A."/>
            <person name="Guss A.M."/>
            <person name="Hedderich R."/>
            <person name="Ingram-Smith C."/>
            <person name="Kuettner H.C."/>
            <person name="Krzycki J.A."/>
            <person name="Leigh J.A."/>
            <person name="Li W."/>
            <person name="Liu J."/>
            <person name="Mukhopadhyay B."/>
            <person name="Reeve J.N."/>
            <person name="Smith K."/>
            <person name="Springer T.A."/>
            <person name="Umayam L.A."/>
            <person name="White O."/>
            <person name="White R.H."/>
            <person name="de Macario E.C."/>
            <person name="Ferry J.G."/>
            <person name="Jarrell K.F."/>
            <person name="Jing H."/>
            <person name="Macario A.J.L."/>
            <person name="Paulsen I.T."/>
            <person name="Pritchett M."/>
            <person name="Sowers K.R."/>
            <person name="Swanson R.V."/>
            <person name="Zinder S.H."/>
            <person name="Lander E."/>
            <person name="Metcalf W.W."/>
            <person name="Birren B."/>
        </authorList>
    </citation>
    <scope>NUCLEOTIDE SEQUENCE [LARGE SCALE GENOMIC DNA]</scope>
    <source>
        <strain>ATCC 35395 / DSM 2834 / JCM 12185 / C2A</strain>
    </source>
</reference>
<reference key="2">
    <citation type="journal article" date="2010" name="Mol. Microbiol.">
        <title>Methanogenesis by Methanosarcina acetivorans involves two structurally and functionally distinct classes of heterodisulfide reductase.</title>
        <authorList>
            <person name="Buan N.R."/>
            <person name="Metcalf W.W."/>
        </authorList>
    </citation>
    <scope>FUNCTION</scope>
    <scope>CATALYTIC ACTIVITY</scope>
    <scope>SUBUNIT</scope>
    <scope>INDUCTION</scope>
    <scope>DISRUPTION PHENOTYPE</scope>
    <source>
        <strain>ATCC 35395 / DSM 2834 / JCM 12185 / C2A</strain>
    </source>
</reference>
<evidence type="ECO:0000250" key="1">
    <source>
        <dbReference type="UniProtKB" id="Q8TIB8"/>
    </source>
</evidence>
<evidence type="ECO:0000269" key="2">
    <source>
    </source>
</evidence>
<evidence type="ECO:0000303" key="3">
    <source>
    </source>
</evidence>
<evidence type="ECO:0000305" key="4"/>
<evidence type="ECO:0000305" key="5">
    <source>
    </source>
</evidence>
<evidence type="ECO:0000312" key="6">
    <source>
        <dbReference type="EMBL" id="AAM06499.1"/>
    </source>
</evidence>
<organism>
    <name type="scientific">Methanosarcina acetivorans (strain ATCC 35395 / DSM 2834 / JCM 12185 / C2A)</name>
    <dbReference type="NCBI Taxonomy" id="188937"/>
    <lineage>
        <taxon>Archaea</taxon>
        <taxon>Methanobacteriati</taxon>
        <taxon>Methanobacteriota</taxon>
        <taxon>Stenosarchaea group</taxon>
        <taxon>Methanomicrobia</taxon>
        <taxon>Methanosarcinales</taxon>
        <taxon>Methanosarcinaceae</taxon>
        <taxon>Methanosarcina</taxon>
    </lineage>
</organism>